<sequence length="306" mass="34557">MEVTFFGTSAGLPTKERNTQAIALNLEPYSNSIWLFDVGEGTQHQILHHAIKLGKVTHIFITHMHGDHIFGLPGLLSSRSFQGGEQKPLTLVGPKGIKAYVEMSMNLSESHLNYPITYIEIDDHLTYHHDGFTVEAHLLNHGVPSYGYRVMAPETTGTINVEALKNIGLEPGPKYQEVKSHDTFEHNGQVYQSKDFRGESKQGPVVAIFGDTKPCSNERVISRDADVMVHEATYIDGEKHLANNYHHSHIEDVFALIKEANVKRTLITHLSNRYNTEDINEIYQTLIQNEDTPNFNFVKDFDSFKV</sequence>
<organism>
    <name type="scientific">Staphylococcus aureus (strain MSSA476)</name>
    <dbReference type="NCBI Taxonomy" id="282459"/>
    <lineage>
        <taxon>Bacteria</taxon>
        <taxon>Bacillati</taxon>
        <taxon>Bacillota</taxon>
        <taxon>Bacilli</taxon>
        <taxon>Bacillales</taxon>
        <taxon>Staphylococcaceae</taxon>
        <taxon>Staphylococcus</taxon>
    </lineage>
</organism>
<reference key="1">
    <citation type="journal article" date="2004" name="Proc. Natl. Acad. Sci. U.S.A.">
        <title>Complete genomes of two clinical Staphylococcus aureus strains: evidence for the rapid evolution of virulence and drug resistance.</title>
        <authorList>
            <person name="Holden M.T.G."/>
            <person name="Feil E.J."/>
            <person name="Lindsay J.A."/>
            <person name="Peacock S.J."/>
            <person name="Day N.P.J."/>
            <person name="Enright M.C."/>
            <person name="Foster T.J."/>
            <person name="Moore C.E."/>
            <person name="Hurst L."/>
            <person name="Atkin R."/>
            <person name="Barron A."/>
            <person name="Bason N."/>
            <person name="Bentley S.D."/>
            <person name="Chillingworth C."/>
            <person name="Chillingworth T."/>
            <person name="Churcher C."/>
            <person name="Clark L."/>
            <person name="Corton C."/>
            <person name="Cronin A."/>
            <person name="Doggett J."/>
            <person name="Dowd L."/>
            <person name="Feltwell T."/>
            <person name="Hance Z."/>
            <person name="Harris B."/>
            <person name="Hauser H."/>
            <person name="Holroyd S."/>
            <person name="Jagels K."/>
            <person name="James K.D."/>
            <person name="Lennard N."/>
            <person name="Line A."/>
            <person name="Mayes R."/>
            <person name="Moule S."/>
            <person name="Mungall K."/>
            <person name="Ormond D."/>
            <person name="Quail M.A."/>
            <person name="Rabbinowitsch E."/>
            <person name="Rutherford K.M."/>
            <person name="Sanders M."/>
            <person name="Sharp S."/>
            <person name="Simmonds M."/>
            <person name="Stevens K."/>
            <person name="Whitehead S."/>
            <person name="Barrell B.G."/>
            <person name="Spratt B.G."/>
            <person name="Parkhill J."/>
        </authorList>
    </citation>
    <scope>NUCLEOTIDE SEQUENCE [LARGE SCALE GENOMIC DNA]</scope>
    <source>
        <strain>MSSA476</strain>
    </source>
</reference>
<accession>Q6G960</accession>
<feature type="chain" id="PRO_0000155897" description="Ribonuclease Z">
    <location>
        <begin position="1"/>
        <end position="306"/>
    </location>
</feature>
<feature type="active site" description="Proton acceptor" evidence="1">
    <location>
        <position position="67"/>
    </location>
</feature>
<feature type="binding site" evidence="1">
    <location>
        <position position="63"/>
    </location>
    <ligand>
        <name>Zn(2+)</name>
        <dbReference type="ChEBI" id="CHEBI:29105"/>
        <label>1</label>
        <note>catalytic</note>
    </ligand>
</feature>
<feature type="binding site" evidence="1">
    <location>
        <position position="65"/>
    </location>
    <ligand>
        <name>Zn(2+)</name>
        <dbReference type="ChEBI" id="CHEBI:29105"/>
        <label>1</label>
        <note>catalytic</note>
    </ligand>
</feature>
<feature type="binding site" evidence="1">
    <location>
        <position position="67"/>
    </location>
    <ligand>
        <name>Zn(2+)</name>
        <dbReference type="ChEBI" id="CHEBI:29105"/>
        <label>2</label>
        <note>catalytic</note>
    </ligand>
</feature>
<feature type="binding site" evidence="1">
    <location>
        <position position="68"/>
    </location>
    <ligand>
        <name>Zn(2+)</name>
        <dbReference type="ChEBI" id="CHEBI:29105"/>
        <label>2</label>
        <note>catalytic</note>
    </ligand>
</feature>
<feature type="binding site" evidence="1">
    <location>
        <position position="141"/>
    </location>
    <ligand>
        <name>Zn(2+)</name>
        <dbReference type="ChEBI" id="CHEBI:29105"/>
        <label>1</label>
        <note>catalytic</note>
    </ligand>
</feature>
<feature type="binding site" evidence="1">
    <location>
        <position position="211"/>
    </location>
    <ligand>
        <name>Zn(2+)</name>
        <dbReference type="ChEBI" id="CHEBI:29105"/>
        <label>1</label>
        <note>catalytic</note>
    </ligand>
</feature>
<feature type="binding site" evidence="1">
    <location>
        <position position="211"/>
    </location>
    <ligand>
        <name>Zn(2+)</name>
        <dbReference type="ChEBI" id="CHEBI:29105"/>
        <label>2</label>
        <note>catalytic</note>
    </ligand>
</feature>
<feature type="binding site" evidence="1">
    <location>
        <position position="269"/>
    </location>
    <ligand>
        <name>Zn(2+)</name>
        <dbReference type="ChEBI" id="CHEBI:29105"/>
        <label>2</label>
        <note>catalytic</note>
    </ligand>
</feature>
<protein>
    <recommendedName>
        <fullName evidence="1">Ribonuclease Z</fullName>
        <shortName evidence="1">RNase Z</shortName>
        <ecNumber evidence="1">3.1.26.11</ecNumber>
    </recommendedName>
    <alternativeName>
        <fullName evidence="1">tRNA 3 endonuclease</fullName>
    </alternativeName>
    <alternativeName>
        <fullName evidence="1">tRNase Z</fullName>
    </alternativeName>
</protein>
<dbReference type="EC" id="3.1.26.11" evidence="1"/>
<dbReference type="EMBL" id="BX571857">
    <property type="protein sequence ID" value="CAG43221.1"/>
    <property type="molecule type" value="Genomic_DNA"/>
</dbReference>
<dbReference type="RefSeq" id="WP_000454068.1">
    <property type="nucleotide sequence ID" value="NC_002953.3"/>
</dbReference>
<dbReference type="SMR" id="Q6G960"/>
<dbReference type="KEGG" id="sas:SAS1444"/>
<dbReference type="HOGENOM" id="CLU_031317_2_0_9"/>
<dbReference type="GO" id="GO:0042781">
    <property type="term" value="F:3'-tRNA processing endoribonuclease activity"/>
    <property type="evidence" value="ECO:0007669"/>
    <property type="project" value="UniProtKB-UniRule"/>
</dbReference>
<dbReference type="GO" id="GO:0008270">
    <property type="term" value="F:zinc ion binding"/>
    <property type="evidence" value="ECO:0007669"/>
    <property type="project" value="UniProtKB-UniRule"/>
</dbReference>
<dbReference type="CDD" id="cd07717">
    <property type="entry name" value="RNaseZ_ZiPD-like_MBL-fold"/>
    <property type="match status" value="1"/>
</dbReference>
<dbReference type="FunFam" id="3.60.15.10:FF:000002">
    <property type="entry name" value="Ribonuclease Z"/>
    <property type="match status" value="1"/>
</dbReference>
<dbReference type="Gene3D" id="3.60.15.10">
    <property type="entry name" value="Ribonuclease Z/Hydroxyacylglutathione hydrolase-like"/>
    <property type="match status" value="1"/>
</dbReference>
<dbReference type="HAMAP" id="MF_01818">
    <property type="entry name" value="RNase_Z_BN"/>
    <property type="match status" value="1"/>
</dbReference>
<dbReference type="InterPro" id="IPR036866">
    <property type="entry name" value="RibonucZ/Hydroxyglut_hydro"/>
</dbReference>
<dbReference type="InterPro" id="IPR013471">
    <property type="entry name" value="RNase_Z/BN"/>
</dbReference>
<dbReference type="InterPro" id="IPR027794">
    <property type="entry name" value="tRNase_Z_dom"/>
</dbReference>
<dbReference type="NCBIfam" id="NF000801">
    <property type="entry name" value="PRK00055.1-3"/>
    <property type="match status" value="1"/>
</dbReference>
<dbReference type="NCBIfam" id="TIGR02651">
    <property type="entry name" value="RNase_Z"/>
    <property type="match status" value="1"/>
</dbReference>
<dbReference type="PANTHER" id="PTHR46018">
    <property type="entry name" value="ZINC PHOSPHODIESTERASE ELAC PROTEIN 1"/>
    <property type="match status" value="1"/>
</dbReference>
<dbReference type="PANTHER" id="PTHR46018:SF2">
    <property type="entry name" value="ZINC PHOSPHODIESTERASE ELAC PROTEIN 1"/>
    <property type="match status" value="1"/>
</dbReference>
<dbReference type="Pfam" id="PF13691">
    <property type="entry name" value="Lactamase_B_4"/>
    <property type="match status" value="1"/>
</dbReference>
<dbReference type="SUPFAM" id="SSF56281">
    <property type="entry name" value="Metallo-hydrolase/oxidoreductase"/>
    <property type="match status" value="1"/>
</dbReference>
<proteinExistence type="inferred from homology"/>
<gene>
    <name evidence="1" type="primary">rnz</name>
    <name type="ordered locus">SAS1444</name>
</gene>
<name>RNZ_STAAS</name>
<evidence type="ECO:0000255" key="1">
    <source>
        <dbReference type="HAMAP-Rule" id="MF_01818"/>
    </source>
</evidence>
<keyword id="KW-0255">Endonuclease</keyword>
<keyword id="KW-0378">Hydrolase</keyword>
<keyword id="KW-0479">Metal-binding</keyword>
<keyword id="KW-0540">Nuclease</keyword>
<keyword id="KW-0819">tRNA processing</keyword>
<keyword id="KW-0862">Zinc</keyword>
<comment type="function">
    <text evidence="1">Zinc phosphodiesterase, which displays some tRNA 3'-processing endonuclease activity. Probably involved in tRNA maturation, by removing a 3'-trailer from precursor tRNA.</text>
</comment>
<comment type="catalytic activity">
    <reaction evidence="1">
        <text>Endonucleolytic cleavage of RNA, removing extra 3' nucleotides from tRNA precursor, generating 3' termini of tRNAs. A 3'-hydroxy group is left at the tRNA terminus and a 5'-phosphoryl group is left at the trailer molecule.</text>
        <dbReference type="EC" id="3.1.26.11"/>
    </reaction>
</comment>
<comment type="cofactor">
    <cofactor evidence="1">
        <name>Zn(2+)</name>
        <dbReference type="ChEBI" id="CHEBI:29105"/>
    </cofactor>
    <text evidence="1">Binds 2 Zn(2+) ions.</text>
</comment>
<comment type="subunit">
    <text evidence="1">Homodimer.</text>
</comment>
<comment type="similarity">
    <text evidence="1">Belongs to the RNase Z family.</text>
</comment>